<comment type="function">
    <text evidence="1">Catalyzes the condensation of (S)-aspartate-beta-semialdehyde [(S)-ASA] and pyruvate to 4-hydroxy-tetrahydrodipicolinate (HTPA).</text>
</comment>
<comment type="catalytic activity">
    <reaction evidence="1">
        <text>L-aspartate 4-semialdehyde + pyruvate = (2S,4S)-4-hydroxy-2,3,4,5-tetrahydrodipicolinate + H2O + H(+)</text>
        <dbReference type="Rhea" id="RHEA:34171"/>
        <dbReference type="ChEBI" id="CHEBI:15361"/>
        <dbReference type="ChEBI" id="CHEBI:15377"/>
        <dbReference type="ChEBI" id="CHEBI:15378"/>
        <dbReference type="ChEBI" id="CHEBI:67139"/>
        <dbReference type="ChEBI" id="CHEBI:537519"/>
        <dbReference type="EC" id="4.3.3.7"/>
    </reaction>
</comment>
<comment type="pathway">
    <text evidence="1">Amino-acid biosynthesis; L-lysine biosynthesis via DAP pathway; (S)-tetrahydrodipicolinate from L-aspartate: step 3/4.</text>
</comment>
<comment type="subunit">
    <text evidence="1">Homotetramer; dimer of dimers.</text>
</comment>
<comment type="subcellular location">
    <subcellularLocation>
        <location evidence="1">Cytoplasm</location>
    </subcellularLocation>
</comment>
<comment type="similarity">
    <text evidence="1">Belongs to the DapA family.</text>
</comment>
<comment type="caution">
    <text evidence="2">Was originally thought to be a dihydrodipicolinate synthase (DHDPS), catalyzing the condensation of (S)-aspartate-beta-semialdehyde [(S)-ASA] and pyruvate to dihydrodipicolinate (DHDP). However, it was shown in E.coli that the product of the enzymatic reaction is not dihydrodipicolinate but in fact (4S)-4-hydroxy-2,3,4,5-tetrahydro-(2S)-dipicolinic acid (HTPA), and that the consecutive dehydration reaction leading to DHDP is not spontaneous but catalyzed by DapB.</text>
</comment>
<name>DAPA_ALIF1</name>
<accession>Q5E3I3</accession>
<evidence type="ECO:0000255" key="1">
    <source>
        <dbReference type="HAMAP-Rule" id="MF_00418"/>
    </source>
</evidence>
<evidence type="ECO:0000305" key="2"/>
<feature type="chain" id="PRO_0000103180" description="4-hydroxy-tetrahydrodipicolinate synthase">
    <location>
        <begin position="1"/>
        <end position="293"/>
    </location>
</feature>
<feature type="active site" description="Proton donor/acceptor" evidence="1">
    <location>
        <position position="133"/>
    </location>
</feature>
<feature type="active site" description="Schiff-base intermediate with substrate" evidence="1">
    <location>
        <position position="161"/>
    </location>
</feature>
<feature type="binding site" evidence="1">
    <location>
        <position position="45"/>
    </location>
    <ligand>
        <name>pyruvate</name>
        <dbReference type="ChEBI" id="CHEBI:15361"/>
    </ligand>
</feature>
<feature type="binding site" evidence="1">
    <location>
        <position position="203"/>
    </location>
    <ligand>
        <name>pyruvate</name>
        <dbReference type="ChEBI" id="CHEBI:15361"/>
    </ligand>
</feature>
<feature type="site" description="Part of a proton relay during catalysis" evidence="1">
    <location>
        <position position="44"/>
    </location>
</feature>
<feature type="site" description="Part of a proton relay during catalysis" evidence="1">
    <location>
        <position position="107"/>
    </location>
</feature>
<keyword id="KW-0028">Amino-acid biosynthesis</keyword>
<keyword id="KW-0963">Cytoplasm</keyword>
<keyword id="KW-0220">Diaminopimelate biosynthesis</keyword>
<keyword id="KW-0456">Lyase</keyword>
<keyword id="KW-0457">Lysine biosynthesis</keyword>
<keyword id="KW-1185">Reference proteome</keyword>
<keyword id="KW-0704">Schiff base</keyword>
<sequence length="293" mass="31325">MFSGSIVALVTPLDTDGEVDYNSLKSLVDYHIKAGTNGIVAVGTTGESATLSVEEHVKLVMKTLEFADGRIPVIAGTGANATHEAVTFSKLFHDSGVAGCLSVTPYYNKPTQEGLFQHYKAISEATDIPQILYNVPGRTAVDLLPETVARLAELDNIVALKDATGDLDRVAITRELCGENFIQLSGDDATALDFVKLGGHGVISVTSNIAAKDMATMFALAAQGKFEEAEIINQRLMPLHNDLFVEANPIPVKWAAHRLGMITHSDIRLPLTELSLSAQPTVEQALKSAGLLK</sequence>
<proteinExistence type="inferred from homology"/>
<gene>
    <name evidence="1" type="primary">dapA</name>
    <name type="ordered locus">VF_1918</name>
</gene>
<dbReference type="EC" id="4.3.3.7" evidence="1"/>
<dbReference type="EMBL" id="CP000020">
    <property type="protein sequence ID" value="AAW86413.1"/>
    <property type="molecule type" value="Genomic_DNA"/>
</dbReference>
<dbReference type="RefSeq" id="WP_011262401.1">
    <property type="nucleotide sequence ID" value="NC_006840.2"/>
</dbReference>
<dbReference type="RefSeq" id="YP_205301.1">
    <property type="nucleotide sequence ID" value="NC_006840.2"/>
</dbReference>
<dbReference type="SMR" id="Q5E3I3"/>
<dbReference type="STRING" id="312309.VF_1918"/>
<dbReference type="EnsemblBacteria" id="AAW86413">
    <property type="protein sequence ID" value="AAW86413"/>
    <property type="gene ID" value="VF_1918"/>
</dbReference>
<dbReference type="GeneID" id="54164615"/>
<dbReference type="KEGG" id="vfi:VF_1918"/>
<dbReference type="PATRIC" id="fig|312309.11.peg.1945"/>
<dbReference type="eggNOG" id="COG0329">
    <property type="taxonomic scope" value="Bacteria"/>
</dbReference>
<dbReference type="HOGENOM" id="CLU_049343_7_1_6"/>
<dbReference type="OrthoDB" id="9782828at2"/>
<dbReference type="UniPathway" id="UPA00034">
    <property type="reaction ID" value="UER00017"/>
</dbReference>
<dbReference type="Proteomes" id="UP000000537">
    <property type="component" value="Chromosome I"/>
</dbReference>
<dbReference type="GO" id="GO:0005829">
    <property type="term" value="C:cytosol"/>
    <property type="evidence" value="ECO:0007669"/>
    <property type="project" value="TreeGrafter"/>
</dbReference>
<dbReference type="GO" id="GO:0008840">
    <property type="term" value="F:4-hydroxy-tetrahydrodipicolinate synthase activity"/>
    <property type="evidence" value="ECO:0007669"/>
    <property type="project" value="UniProtKB-UniRule"/>
</dbReference>
<dbReference type="GO" id="GO:0019877">
    <property type="term" value="P:diaminopimelate biosynthetic process"/>
    <property type="evidence" value="ECO:0007669"/>
    <property type="project" value="UniProtKB-UniRule"/>
</dbReference>
<dbReference type="GO" id="GO:0009089">
    <property type="term" value="P:lysine biosynthetic process via diaminopimelate"/>
    <property type="evidence" value="ECO:0007669"/>
    <property type="project" value="UniProtKB-UniRule"/>
</dbReference>
<dbReference type="CDD" id="cd00950">
    <property type="entry name" value="DHDPS"/>
    <property type="match status" value="1"/>
</dbReference>
<dbReference type="FunFam" id="3.20.20.70:FF:000046">
    <property type="entry name" value="4-hydroxy-tetrahydrodipicolinate synthase"/>
    <property type="match status" value="1"/>
</dbReference>
<dbReference type="Gene3D" id="3.20.20.70">
    <property type="entry name" value="Aldolase class I"/>
    <property type="match status" value="1"/>
</dbReference>
<dbReference type="HAMAP" id="MF_00418">
    <property type="entry name" value="DapA"/>
    <property type="match status" value="1"/>
</dbReference>
<dbReference type="InterPro" id="IPR013785">
    <property type="entry name" value="Aldolase_TIM"/>
</dbReference>
<dbReference type="InterPro" id="IPR005263">
    <property type="entry name" value="DapA"/>
</dbReference>
<dbReference type="InterPro" id="IPR002220">
    <property type="entry name" value="DapA-like"/>
</dbReference>
<dbReference type="InterPro" id="IPR020625">
    <property type="entry name" value="Schiff_base-form_aldolases_AS"/>
</dbReference>
<dbReference type="InterPro" id="IPR020624">
    <property type="entry name" value="Schiff_base-form_aldolases_CS"/>
</dbReference>
<dbReference type="NCBIfam" id="TIGR00674">
    <property type="entry name" value="dapA"/>
    <property type="match status" value="1"/>
</dbReference>
<dbReference type="PANTHER" id="PTHR12128:SF66">
    <property type="entry name" value="4-HYDROXY-2-OXOGLUTARATE ALDOLASE, MITOCHONDRIAL"/>
    <property type="match status" value="1"/>
</dbReference>
<dbReference type="PANTHER" id="PTHR12128">
    <property type="entry name" value="DIHYDRODIPICOLINATE SYNTHASE"/>
    <property type="match status" value="1"/>
</dbReference>
<dbReference type="Pfam" id="PF00701">
    <property type="entry name" value="DHDPS"/>
    <property type="match status" value="1"/>
</dbReference>
<dbReference type="PIRSF" id="PIRSF001365">
    <property type="entry name" value="DHDPS"/>
    <property type="match status" value="1"/>
</dbReference>
<dbReference type="PRINTS" id="PR00146">
    <property type="entry name" value="DHPICSNTHASE"/>
</dbReference>
<dbReference type="SMART" id="SM01130">
    <property type="entry name" value="DHDPS"/>
    <property type="match status" value="1"/>
</dbReference>
<dbReference type="SUPFAM" id="SSF51569">
    <property type="entry name" value="Aldolase"/>
    <property type="match status" value="1"/>
</dbReference>
<dbReference type="PROSITE" id="PS00665">
    <property type="entry name" value="DHDPS_1"/>
    <property type="match status" value="1"/>
</dbReference>
<dbReference type="PROSITE" id="PS00666">
    <property type="entry name" value="DHDPS_2"/>
    <property type="match status" value="1"/>
</dbReference>
<reference key="1">
    <citation type="journal article" date="2005" name="Proc. Natl. Acad. Sci. U.S.A.">
        <title>Complete genome sequence of Vibrio fischeri: a symbiotic bacterium with pathogenic congeners.</title>
        <authorList>
            <person name="Ruby E.G."/>
            <person name="Urbanowski M."/>
            <person name="Campbell J."/>
            <person name="Dunn A."/>
            <person name="Faini M."/>
            <person name="Gunsalus R."/>
            <person name="Lostroh P."/>
            <person name="Lupp C."/>
            <person name="McCann J."/>
            <person name="Millikan D."/>
            <person name="Schaefer A."/>
            <person name="Stabb E."/>
            <person name="Stevens A."/>
            <person name="Visick K."/>
            <person name="Whistler C."/>
            <person name="Greenberg E.P."/>
        </authorList>
    </citation>
    <scope>NUCLEOTIDE SEQUENCE [LARGE SCALE GENOMIC DNA]</scope>
    <source>
        <strain>ATCC 700601 / ES114</strain>
    </source>
</reference>
<organism>
    <name type="scientific">Aliivibrio fischeri (strain ATCC 700601 / ES114)</name>
    <name type="common">Vibrio fischeri</name>
    <dbReference type="NCBI Taxonomy" id="312309"/>
    <lineage>
        <taxon>Bacteria</taxon>
        <taxon>Pseudomonadati</taxon>
        <taxon>Pseudomonadota</taxon>
        <taxon>Gammaproteobacteria</taxon>
        <taxon>Vibrionales</taxon>
        <taxon>Vibrionaceae</taxon>
        <taxon>Aliivibrio</taxon>
    </lineage>
</organism>
<protein>
    <recommendedName>
        <fullName evidence="1">4-hydroxy-tetrahydrodipicolinate synthase</fullName>
        <shortName evidence="1">HTPA synthase</shortName>
        <ecNumber evidence="1">4.3.3.7</ecNumber>
    </recommendedName>
</protein>